<reference key="1">
    <citation type="submission" date="2006-06" db="EMBL/GenBank/DDBJ databases">
        <title>Complete sequence of Pseudoalteromonas atlantica T6c.</title>
        <authorList>
            <consortium name="US DOE Joint Genome Institute"/>
            <person name="Copeland A."/>
            <person name="Lucas S."/>
            <person name="Lapidus A."/>
            <person name="Barry K."/>
            <person name="Detter J.C."/>
            <person name="Glavina del Rio T."/>
            <person name="Hammon N."/>
            <person name="Israni S."/>
            <person name="Dalin E."/>
            <person name="Tice H."/>
            <person name="Pitluck S."/>
            <person name="Saunders E."/>
            <person name="Brettin T."/>
            <person name="Bruce D."/>
            <person name="Han C."/>
            <person name="Tapia R."/>
            <person name="Gilna P."/>
            <person name="Schmutz J."/>
            <person name="Larimer F."/>
            <person name="Land M."/>
            <person name="Hauser L."/>
            <person name="Kyrpides N."/>
            <person name="Kim E."/>
            <person name="Karls A.C."/>
            <person name="Bartlett D."/>
            <person name="Higgins B.P."/>
            <person name="Richardson P."/>
        </authorList>
    </citation>
    <scope>NUCLEOTIDE SEQUENCE [LARGE SCALE GENOMIC DNA]</scope>
    <source>
        <strain>T6c / ATCC BAA-1087</strain>
    </source>
</reference>
<dbReference type="EC" id="5.3.1.5" evidence="1"/>
<dbReference type="EMBL" id="CP000388">
    <property type="protein sequence ID" value="ABG42228.1"/>
    <property type="molecule type" value="Genomic_DNA"/>
</dbReference>
<dbReference type="RefSeq" id="WP_011576446.1">
    <property type="nucleotide sequence ID" value="NC_008228.1"/>
</dbReference>
<dbReference type="SMR" id="Q15PG0"/>
<dbReference type="STRING" id="342610.Patl_3726"/>
<dbReference type="KEGG" id="pat:Patl_3726"/>
<dbReference type="eggNOG" id="COG2115">
    <property type="taxonomic scope" value="Bacteria"/>
</dbReference>
<dbReference type="HOGENOM" id="CLU_037261_1_0_6"/>
<dbReference type="OrthoDB" id="9763981at2"/>
<dbReference type="Proteomes" id="UP000001981">
    <property type="component" value="Chromosome"/>
</dbReference>
<dbReference type="GO" id="GO:0005737">
    <property type="term" value="C:cytoplasm"/>
    <property type="evidence" value="ECO:0007669"/>
    <property type="project" value="UniProtKB-SubCell"/>
</dbReference>
<dbReference type="GO" id="GO:0000287">
    <property type="term" value="F:magnesium ion binding"/>
    <property type="evidence" value="ECO:0007669"/>
    <property type="project" value="UniProtKB-UniRule"/>
</dbReference>
<dbReference type="GO" id="GO:0009045">
    <property type="term" value="F:xylose isomerase activity"/>
    <property type="evidence" value="ECO:0007669"/>
    <property type="project" value="UniProtKB-UniRule"/>
</dbReference>
<dbReference type="GO" id="GO:0042732">
    <property type="term" value="P:D-xylose metabolic process"/>
    <property type="evidence" value="ECO:0007669"/>
    <property type="project" value="UniProtKB-UniRule"/>
</dbReference>
<dbReference type="FunFam" id="3.20.20.150:FF:000002">
    <property type="entry name" value="Xylose isomerase"/>
    <property type="match status" value="1"/>
</dbReference>
<dbReference type="Gene3D" id="3.20.20.150">
    <property type="entry name" value="Divalent-metal-dependent TIM barrel enzymes"/>
    <property type="match status" value="1"/>
</dbReference>
<dbReference type="HAMAP" id="MF_00455">
    <property type="entry name" value="Xylose_isom_A"/>
    <property type="match status" value="1"/>
</dbReference>
<dbReference type="InterPro" id="IPR036237">
    <property type="entry name" value="Xyl_isomerase-like_sf"/>
</dbReference>
<dbReference type="InterPro" id="IPR013452">
    <property type="entry name" value="Xylose_isom_bac"/>
</dbReference>
<dbReference type="InterPro" id="IPR001998">
    <property type="entry name" value="Xylose_isomerase"/>
</dbReference>
<dbReference type="NCBIfam" id="NF003998">
    <property type="entry name" value="PRK05474.1"/>
    <property type="match status" value="1"/>
</dbReference>
<dbReference type="NCBIfam" id="TIGR02630">
    <property type="entry name" value="xylose_isom_A"/>
    <property type="match status" value="1"/>
</dbReference>
<dbReference type="PANTHER" id="PTHR48408">
    <property type="match status" value="1"/>
</dbReference>
<dbReference type="PANTHER" id="PTHR48408:SF1">
    <property type="entry name" value="XYLOSE ISOMERASE"/>
    <property type="match status" value="1"/>
</dbReference>
<dbReference type="PRINTS" id="PR00688">
    <property type="entry name" value="XYLOSISMRASE"/>
</dbReference>
<dbReference type="SUPFAM" id="SSF51658">
    <property type="entry name" value="Xylose isomerase-like"/>
    <property type="match status" value="1"/>
</dbReference>
<dbReference type="PROSITE" id="PS51415">
    <property type="entry name" value="XYLOSE_ISOMERASE"/>
    <property type="match status" value="1"/>
</dbReference>
<evidence type="ECO:0000255" key="1">
    <source>
        <dbReference type="HAMAP-Rule" id="MF_00455"/>
    </source>
</evidence>
<gene>
    <name evidence="1" type="primary">xylA</name>
    <name type="ordered locus">Patl_3726</name>
</gene>
<sequence length="439" mass="49196">MAEYFKDIPKVKFEGTSSDNPLAFRHYNPEELVLGKSMKEHLRLAACYWHNFCWDGADVFGAGTFNRPWLQAGDAMQRAKEKADVAFEFFSKLNIPYYCFHDVDVSPEGNSIKEYINNFAQMTDVLEAKQEETGLKLLWGTANLFSNPRYASGAASSPNPEVFTYGATQVMHAMNATKRLGGENYVLWGGREGYETLLNTDLRQEREQLGRFMNMVVEHKHKIGFKGLLLIEPKPQEPTKHQYDYDTATVYGFLKQYGLENEFKVNIEANHATLAGHSFQHEVATAISLGLFGSIDANRGDPQLGWDTDQFPNSVEELSLVIYEILKAGGFTSGGFNFDTKLRRQSSDPQDMFIAHIGGMDHLAIGLKKAALMIENDFLGQAVSKRYAGWNGELGKGIQGGDFNLESLANLCVDKNLQPKHVSGQQELLENKVNNVLYG</sequence>
<comment type="catalytic activity">
    <reaction evidence="1">
        <text>alpha-D-xylose = alpha-D-xylulofuranose</text>
        <dbReference type="Rhea" id="RHEA:22816"/>
        <dbReference type="ChEBI" id="CHEBI:28518"/>
        <dbReference type="ChEBI" id="CHEBI:188998"/>
        <dbReference type="EC" id="5.3.1.5"/>
    </reaction>
</comment>
<comment type="cofactor">
    <cofactor evidence="1">
        <name>Mg(2+)</name>
        <dbReference type="ChEBI" id="CHEBI:18420"/>
    </cofactor>
    <text evidence="1">Binds 2 magnesium ions per subunit.</text>
</comment>
<comment type="subunit">
    <text evidence="1">Homotetramer.</text>
</comment>
<comment type="subcellular location">
    <subcellularLocation>
        <location evidence="1">Cytoplasm</location>
    </subcellularLocation>
</comment>
<comment type="similarity">
    <text evidence="1">Belongs to the xylose isomerase family.</text>
</comment>
<organism>
    <name type="scientific">Pseudoalteromonas atlantica (strain T6c / ATCC BAA-1087)</name>
    <dbReference type="NCBI Taxonomy" id="3042615"/>
    <lineage>
        <taxon>Bacteria</taxon>
        <taxon>Pseudomonadati</taxon>
        <taxon>Pseudomonadota</taxon>
        <taxon>Gammaproteobacteria</taxon>
        <taxon>Alteromonadales</taxon>
        <taxon>Alteromonadaceae</taxon>
        <taxon>Paraglaciecola</taxon>
    </lineage>
</organism>
<accession>Q15PG0</accession>
<name>XYLA_PSEA6</name>
<feature type="chain" id="PRO_1000026449" description="Xylose isomerase">
    <location>
        <begin position="1"/>
        <end position="439"/>
    </location>
</feature>
<feature type="active site" evidence="1">
    <location>
        <position position="101"/>
    </location>
</feature>
<feature type="active site" evidence="1">
    <location>
        <position position="104"/>
    </location>
</feature>
<feature type="binding site" evidence="1">
    <location>
        <position position="232"/>
    </location>
    <ligand>
        <name>Mg(2+)</name>
        <dbReference type="ChEBI" id="CHEBI:18420"/>
        <label>1</label>
    </ligand>
</feature>
<feature type="binding site" evidence="1">
    <location>
        <position position="268"/>
    </location>
    <ligand>
        <name>Mg(2+)</name>
        <dbReference type="ChEBI" id="CHEBI:18420"/>
        <label>1</label>
    </ligand>
</feature>
<feature type="binding site" evidence="1">
    <location>
        <position position="268"/>
    </location>
    <ligand>
        <name>Mg(2+)</name>
        <dbReference type="ChEBI" id="CHEBI:18420"/>
        <label>2</label>
    </ligand>
</feature>
<feature type="binding site" evidence="1">
    <location>
        <position position="271"/>
    </location>
    <ligand>
        <name>Mg(2+)</name>
        <dbReference type="ChEBI" id="CHEBI:18420"/>
        <label>2</label>
    </ligand>
</feature>
<feature type="binding site" evidence="1">
    <location>
        <position position="296"/>
    </location>
    <ligand>
        <name>Mg(2+)</name>
        <dbReference type="ChEBI" id="CHEBI:18420"/>
        <label>1</label>
    </ligand>
</feature>
<feature type="binding site" evidence="1">
    <location>
        <position position="307"/>
    </location>
    <ligand>
        <name>Mg(2+)</name>
        <dbReference type="ChEBI" id="CHEBI:18420"/>
        <label>2</label>
    </ligand>
</feature>
<feature type="binding site" evidence="1">
    <location>
        <position position="309"/>
    </location>
    <ligand>
        <name>Mg(2+)</name>
        <dbReference type="ChEBI" id="CHEBI:18420"/>
        <label>2</label>
    </ligand>
</feature>
<feature type="binding site" evidence="1">
    <location>
        <position position="339"/>
    </location>
    <ligand>
        <name>Mg(2+)</name>
        <dbReference type="ChEBI" id="CHEBI:18420"/>
        <label>1</label>
    </ligand>
</feature>
<proteinExistence type="inferred from homology"/>
<keyword id="KW-0119">Carbohydrate metabolism</keyword>
<keyword id="KW-0963">Cytoplasm</keyword>
<keyword id="KW-0413">Isomerase</keyword>
<keyword id="KW-0460">Magnesium</keyword>
<keyword id="KW-0479">Metal-binding</keyword>
<keyword id="KW-0859">Xylose metabolism</keyword>
<protein>
    <recommendedName>
        <fullName evidence="1">Xylose isomerase</fullName>
        <ecNumber evidence="1">5.3.1.5</ecNumber>
    </recommendedName>
</protein>